<reference key="1">
    <citation type="journal article" date="2000" name="Proc. Natl. Acad. Sci. U.S.A.">
        <title>Archaeal adaptation to higher temperatures revealed by genomic sequence of Thermoplasma volcanium.</title>
        <authorList>
            <person name="Kawashima T."/>
            <person name="Amano N."/>
            <person name="Koike H."/>
            <person name="Makino S."/>
            <person name="Higuchi S."/>
            <person name="Kawashima-Ohya Y."/>
            <person name="Watanabe K."/>
            <person name="Yamazaki M."/>
            <person name="Kanehori K."/>
            <person name="Kawamoto T."/>
            <person name="Nunoshiba T."/>
            <person name="Yamamoto Y."/>
            <person name="Aramaki H."/>
            <person name="Makino K."/>
            <person name="Suzuki M."/>
        </authorList>
    </citation>
    <scope>NUCLEOTIDE SEQUENCE [LARGE SCALE GENOMIC DNA]</scope>
    <source>
        <strain>ATCC 51530 / DSM 4299 / JCM 9571 / NBRC 15438 / GSS1</strain>
    </source>
</reference>
<sequence>MIVKVSNLGGSGIAEMPSSKSFTQRYVLASAFLNKSVVLNGITITNDDDVAMRIAESVGSTITINNRSIKISSNFKCPEEIYVGESGTSYRLSIGLLAASGCVTRIKGEDSLAKRPIEPLLMALGENGVKFERNEAGFYNVDGRNSQKKHVEIEGSSSQFVSSLMLYYAKKGGGEFTARNIKSIGYVYITKRVLYDLGYFANIERTITINPTGVWKTAIDVEPDYSSMAFFMVLGLLSDSVDVRFRIKRISRIQPDSVILDLFKNNILINGEEIRVISGINEPVSVDADMNPDLCPPLSVIGIFSKYGVQIRNYERLKTKESNRYEGIIDLAERFGANVEDNGQDLFIKPGSVRFPDVISYKDHRMIMAASIASLIGGFPTVIENAEKTAKSFPGFFAELSKFANVEELA</sequence>
<proteinExistence type="inferred from homology"/>
<feature type="chain" id="PRO_0000088340" description="3-phosphoshikimate 1-carboxyvinyltransferase">
    <location>
        <begin position="1"/>
        <end position="410"/>
    </location>
</feature>
<feature type="active site" description="Proton acceptor" evidence="1">
    <location>
        <position position="293"/>
    </location>
</feature>
<feature type="binding site" evidence="1">
    <location>
        <position position="20"/>
    </location>
    <ligand>
        <name>3-phosphoshikimate</name>
        <dbReference type="ChEBI" id="CHEBI:145989"/>
    </ligand>
</feature>
<feature type="binding site" evidence="1">
    <location>
        <position position="20"/>
    </location>
    <ligand>
        <name>phosphoenolpyruvate</name>
        <dbReference type="ChEBI" id="CHEBI:58702"/>
    </ligand>
</feature>
<feature type="binding site" evidence="1">
    <location>
        <position position="21"/>
    </location>
    <ligand>
        <name>3-phosphoshikimate</name>
        <dbReference type="ChEBI" id="CHEBI:145989"/>
    </ligand>
</feature>
<feature type="binding site" evidence="1">
    <location>
        <position position="25"/>
    </location>
    <ligand>
        <name>3-phosphoshikimate</name>
        <dbReference type="ChEBI" id="CHEBI:145989"/>
    </ligand>
</feature>
<feature type="binding site" evidence="1">
    <location>
        <position position="87"/>
    </location>
    <ligand>
        <name>phosphoenolpyruvate</name>
        <dbReference type="ChEBI" id="CHEBI:58702"/>
    </ligand>
</feature>
<feature type="binding site" evidence="1">
    <location>
        <position position="115"/>
    </location>
    <ligand>
        <name>phosphoenolpyruvate</name>
        <dbReference type="ChEBI" id="CHEBI:58702"/>
    </ligand>
</feature>
<feature type="binding site" evidence="1">
    <location>
        <position position="157"/>
    </location>
    <ligand>
        <name>3-phosphoshikimate</name>
        <dbReference type="ChEBI" id="CHEBI:145989"/>
    </ligand>
</feature>
<feature type="binding site" evidence="1">
    <location>
        <position position="158"/>
    </location>
    <ligand>
        <name>3-phosphoshikimate</name>
        <dbReference type="ChEBI" id="CHEBI:145989"/>
    </ligand>
</feature>
<feature type="binding site" evidence="1">
    <location>
        <position position="159"/>
    </location>
    <ligand>
        <name>3-phosphoshikimate</name>
        <dbReference type="ChEBI" id="CHEBI:145989"/>
    </ligand>
</feature>
<feature type="binding site" evidence="1">
    <location>
        <position position="159"/>
    </location>
    <ligand>
        <name>phosphoenolpyruvate</name>
        <dbReference type="ChEBI" id="CHEBI:58702"/>
    </ligand>
</feature>
<feature type="binding site" evidence="1">
    <location>
        <position position="183"/>
    </location>
    <ligand>
        <name>3-phosphoshikimate</name>
        <dbReference type="ChEBI" id="CHEBI:145989"/>
    </ligand>
</feature>
<feature type="binding site" evidence="1">
    <location>
        <position position="293"/>
    </location>
    <ligand>
        <name>3-phosphoshikimate</name>
        <dbReference type="ChEBI" id="CHEBI:145989"/>
    </ligand>
</feature>
<feature type="binding site" evidence="1">
    <location>
        <position position="320"/>
    </location>
    <ligand>
        <name>3-phosphoshikimate</name>
        <dbReference type="ChEBI" id="CHEBI:145989"/>
    </ligand>
</feature>
<feature type="binding site" evidence="1">
    <location>
        <position position="324"/>
    </location>
    <ligand>
        <name>phosphoenolpyruvate</name>
        <dbReference type="ChEBI" id="CHEBI:58702"/>
    </ligand>
</feature>
<feature type="binding site" evidence="1">
    <location>
        <position position="365"/>
    </location>
    <ligand>
        <name>phosphoenolpyruvate</name>
        <dbReference type="ChEBI" id="CHEBI:58702"/>
    </ligand>
</feature>
<feature type="binding site" evidence="1">
    <location>
        <position position="391"/>
    </location>
    <ligand>
        <name>phosphoenolpyruvate</name>
        <dbReference type="ChEBI" id="CHEBI:58702"/>
    </ligand>
</feature>
<accession>Q978S3</accession>
<protein>
    <recommendedName>
        <fullName evidence="1">3-phosphoshikimate 1-carboxyvinyltransferase</fullName>
        <ecNumber evidence="1">2.5.1.19</ecNumber>
    </recommendedName>
    <alternativeName>
        <fullName evidence="1">5-enolpyruvylshikimate-3-phosphate synthase</fullName>
        <shortName evidence="1">EPSP synthase</shortName>
        <shortName evidence="1">EPSPS</shortName>
    </alternativeName>
</protein>
<keyword id="KW-0028">Amino-acid biosynthesis</keyword>
<keyword id="KW-0057">Aromatic amino acid biosynthesis</keyword>
<keyword id="KW-0963">Cytoplasm</keyword>
<keyword id="KW-0808">Transferase</keyword>
<evidence type="ECO:0000255" key="1">
    <source>
        <dbReference type="HAMAP-Rule" id="MF_00210"/>
    </source>
</evidence>
<gene>
    <name evidence="1" type="primary">aroA</name>
    <name type="ordered locus">TV1342</name>
    <name type="ORF">TVG1387115</name>
</gene>
<organism>
    <name type="scientific">Thermoplasma volcanium (strain ATCC 51530 / DSM 4299 / JCM 9571 / NBRC 15438 / GSS1)</name>
    <dbReference type="NCBI Taxonomy" id="273116"/>
    <lineage>
        <taxon>Archaea</taxon>
        <taxon>Methanobacteriati</taxon>
        <taxon>Thermoplasmatota</taxon>
        <taxon>Thermoplasmata</taxon>
        <taxon>Thermoplasmatales</taxon>
        <taxon>Thermoplasmataceae</taxon>
        <taxon>Thermoplasma</taxon>
    </lineage>
</organism>
<name>AROA_THEVO</name>
<dbReference type="EC" id="2.5.1.19" evidence="1"/>
<dbReference type="EMBL" id="BA000011">
    <property type="protein sequence ID" value="BAB60484.1"/>
    <property type="molecule type" value="Genomic_DNA"/>
</dbReference>
<dbReference type="SMR" id="Q978S3"/>
<dbReference type="STRING" id="273116.gene:9382150"/>
<dbReference type="PaxDb" id="273116-14325581"/>
<dbReference type="KEGG" id="tvo:TVG1387115"/>
<dbReference type="eggNOG" id="arCOG04134">
    <property type="taxonomic scope" value="Archaea"/>
</dbReference>
<dbReference type="HOGENOM" id="CLU_024321_0_0_2"/>
<dbReference type="OrthoDB" id="43788at2157"/>
<dbReference type="PhylomeDB" id="Q978S3"/>
<dbReference type="UniPathway" id="UPA00053"/>
<dbReference type="Proteomes" id="UP000001017">
    <property type="component" value="Chromosome"/>
</dbReference>
<dbReference type="GO" id="GO:0005737">
    <property type="term" value="C:cytoplasm"/>
    <property type="evidence" value="ECO:0007669"/>
    <property type="project" value="UniProtKB-SubCell"/>
</dbReference>
<dbReference type="GO" id="GO:0003866">
    <property type="term" value="F:3-phosphoshikimate 1-carboxyvinyltransferase activity"/>
    <property type="evidence" value="ECO:0007669"/>
    <property type="project" value="UniProtKB-UniRule"/>
</dbReference>
<dbReference type="GO" id="GO:0008652">
    <property type="term" value="P:amino acid biosynthetic process"/>
    <property type="evidence" value="ECO:0007669"/>
    <property type="project" value="UniProtKB-KW"/>
</dbReference>
<dbReference type="GO" id="GO:0009073">
    <property type="term" value="P:aromatic amino acid family biosynthetic process"/>
    <property type="evidence" value="ECO:0007669"/>
    <property type="project" value="UniProtKB-KW"/>
</dbReference>
<dbReference type="GO" id="GO:0009423">
    <property type="term" value="P:chorismate biosynthetic process"/>
    <property type="evidence" value="ECO:0007669"/>
    <property type="project" value="UniProtKB-UniRule"/>
</dbReference>
<dbReference type="CDD" id="cd01556">
    <property type="entry name" value="EPSP_synthase"/>
    <property type="match status" value="1"/>
</dbReference>
<dbReference type="Gene3D" id="3.65.10.10">
    <property type="entry name" value="Enolpyruvate transferase domain"/>
    <property type="match status" value="2"/>
</dbReference>
<dbReference type="HAMAP" id="MF_00210">
    <property type="entry name" value="EPSP_synth"/>
    <property type="match status" value="1"/>
</dbReference>
<dbReference type="InterPro" id="IPR001986">
    <property type="entry name" value="Enolpyruvate_Tfrase_dom"/>
</dbReference>
<dbReference type="InterPro" id="IPR036968">
    <property type="entry name" value="Enolpyruvate_Tfrase_sf"/>
</dbReference>
<dbReference type="InterPro" id="IPR006264">
    <property type="entry name" value="EPSP_synthase"/>
</dbReference>
<dbReference type="InterPro" id="IPR023193">
    <property type="entry name" value="EPSP_synthase_CS"/>
</dbReference>
<dbReference type="InterPro" id="IPR013792">
    <property type="entry name" value="RNA3'P_cycl/enolpyr_Trfase_a/b"/>
</dbReference>
<dbReference type="PANTHER" id="PTHR21090">
    <property type="entry name" value="AROM/DEHYDROQUINATE SYNTHASE"/>
    <property type="match status" value="1"/>
</dbReference>
<dbReference type="PANTHER" id="PTHR21090:SF5">
    <property type="entry name" value="PENTAFUNCTIONAL AROM POLYPEPTIDE"/>
    <property type="match status" value="1"/>
</dbReference>
<dbReference type="Pfam" id="PF00275">
    <property type="entry name" value="EPSP_synthase"/>
    <property type="match status" value="1"/>
</dbReference>
<dbReference type="PIRSF" id="PIRSF000505">
    <property type="entry name" value="EPSPS"/>
    <property type="match status" value="1"/>
</dbReference>
<dbReference type="SUPFAM" id="SSF55205">
    <property type="entry name" value="EPT/RTPC-like"/>
    <property type="match status" value="1"/>
</dbReference>
<dbReference type="PROSITE" id="PS00885">
    <property type="entry name" value="EPSP_SYNTHASE_2"/>
    <property type="match status" value="1"/>
</dbReference>
<comment type="function">
    <text evidence="1">Catalyzes the transfer of the enolpyruvyl moiety of phosphoenolpyruvate (PEP) to the 5-hydroxyl of shikimate-3-phosphate (S3P) to produce enolpyruvyl shikimate-3-phosphate and inorganic phosphate.</text>
</comment>
<comment type="catalytic activity">
    <reaction evidence="1">
        <text>3-phosphoshikimate + phosphoenolpyruvate = 5-O-(1-carboxyvinyl)-3-phosphoshikimate + phosphate</text>
        <dbReference type="Rhea" id="RHEA:21256"/>
        <dbReference type="ChEBI" id="CHEBI:43474"/>
        <dbReference type="ChEBI" id="CHEBI:57701"/>
        <dbReference type="ChEBI" id="CHEBI:58702"/>
        <dbReference type="ChEBI" id="CHEBI:145989"/>
        <dbReference type="EC" id="2.5.1.19"/>
    </reaction>
    <physiologicalReaction direction="left-to-right" evidence="1">
        <dbReference type="Rhea" id="RHEA:21257"/>
    </physiologicalReaction>
</comment>
<comment type="pathway">
    <text evidence="1">Metabolic intermediate biosynthesis; chorismate biosynthesis.</text>
</comment>
<comment type="subunit">
    <text evidence="1">Monomer.</text>
</comment>
<comment type="subcellular location">
    <subcellularLocation>
        <location evidence="1">Cytoplasm</location>
    </subcellularLocation>
</comment>
<comment type="similarity">
    <text evidence="1">Belongs to the EPSP synthase family.</text>
</comment>